<feature type="signal peptide" evidence="3">
    <location>
        <begin position="1"/>
        <end position="31"/>
    </location>
</feature>
<feature type="chain" id="PRO_0000439954" description="Receptor protein-tyrosine kinase CEPR2" evidence="3">
    <location>
        <begin position="32"/>
        <end position="977"/>
    </location>
</feature>
<feature type="topological domain" description="Extracellular" evidence="11">
    <location>
        <begin position="32"/>
        <end position="620"/>
    </location>
</feature>
<feature type="transmembrane region" description="Helical" evidence="3">
    <location>
        <begin position="621"/>
        <end position="641"/>
    </location>
</feature>
<feature type="topological domain" description="Cytoplasmic" evidence="11">
    <location>
        <begin position="642"/>
        <end position="977"/>
    </location>
</feature>
<feature type="repeat" description="LRR 1" evidence="3">
    <location>
        <begin position="97"/>
        <end position="121"/>
    </location>
</feature>
<feature type="repeat" description="LRR 2" evidence="3">
    <location>
        <begin position="122"/>
        <end position="146"/>
    </location>
</feature>
<feature type="repeat" description="LRR 3" evidence="3">
    <location>
        <begin position="148"/>
        <end position="167"/>
    </location>
</feature>
<feature type="repeat" description="LRR 4" evidence="3">
    <location>
        <begin position="168"/>
        <end position="192"/>
    </location>
</feature>
<feature type="repeat" description="LRR 5" evidence="3">
    <location>
        <begin position="193"/>
        <end position="217"/>
    </location>
</feature>
<feature type="repeat" description="LRR 6" evidence="3">
    <location>
        <begin position="219"/>
        <end position="241"/>
    </location>
</feature>
<feature type="repeat" description="LRR 7" evidence="3">
    <location>
        <begin position="242"/>
        <end position="265"/>
    </location>
</feature>
<feature type="repeat" description="LRR 8" evidence="3">
    <location>
        <begin position="266"/>
        <end position="288"/>
    </location>
</feature>
<feature type="repeat" description="LRR 9" evidence="3">
    <location>
        <begin position="290"/>
        <end position="312"/>
    </location>
</feature>
<feature type="repeat" description="LRR 10" evidence="3">
    <location>
        <begin position="313"/>
        <end position="338"/>
    </location>
</feature>
<feature type="repeat" description="LRR 11" evidence="3">
    <location>
        <begin position="340"/>
        <end position="361"/>
    </location>
</feature>
<feature type="repeat" description="LRR 12" evidence="3">
    <location>
        <begin position="363"/>
        <end position="385"/>
    </location>
</feature>
<feature type="repeat" description="LRR 13" evidence="3">
    <location>
        <begin position="386"/>
        <end position="409"/>
    </location>
</feature>
<feature type="repeat" description="LRR 14" evidence="3">
    <location>
        <begin position="411"/>
        <end position="433"/>
    </location>
</feature>
<feature type="repeat" description="LRR 15" evidence="3">
    <location>
        <begin position="434"/>
        <end position="457"/>
    </location>
</feature>
<feature type="repeat" description="LRR 16" evidence="3">
    <location>
        <begin position="458"/>
        <end position="481"/>
    </location>
</feature>
<feature type="repeat" description="LRR 17" evidence="3">
    <location>
        <begin position="482"/>
        <end position="504"/>
    </location>
</feature>
<feature type="repeat" description="LRR 18" evidence="3">
    <location>
        <begin position="506"/>
        <end position="529"/>
    </location>
</feature>
<feature type="repeat" description="LRR 19" evidence="3">
    <location>
        <begin position="530"/>
        <end position="553"/>
    </location>
</feature>
<feature type="repeat" description="LRR 20" evidence="3">
    <location>
        <begin position="555"/>
        <end position="576"/>
    </location>
</feature>
<feature type="domain" description="Protein kinase" evidence="4">
    <location>
        <begin position="683"/>
        <end position="965"/>
    </location>
</feature>
<feature type="active site" description="Proton acceptor" evidence="4">
    <location>
        <position position="814"/>
    </location>
</feature>
<feature type="binding site" evidence="4">
    <location>
        <begin position="689"/>
        <end position="697"/>
    </location>
    <ligand>
        <name>ATP</name>
        <dbReference type="ChEBI" id="CHEBI:30616"/>
    </ligand>
</feature>
<feature type="binding site" evidence="4">
    <location>
        <position position="712"/>
    </location>
    <ligand>
        <name>ATP</name>
        <dbReference type="ChEBI" id="CHEBI:30616"/>
    </ligand>
</feature>
<feature type="modified residue" description="Phosphotyrosine" evidence="1">
    <location>
        <position position="801"/>
    </location>
</feature>
<feature type="modified residue" description="Phosphoserine" evidence="2">
    <location>
        <position position="846"/>
    </location>
</feature>
<feature type="modified residue" description="Phosphotyrosine" evidence="1">
    <location>
        <position position="854"/>
    </location>
</feature>
<feature type="modified residue" description="Phosphotyrosine" evidence="2">
    <location>
        <position position="861"/>
    </location>
</feature>
<feature type="glycosylation site" description="N-linked (GlcNAc...) asparagine" evidence="5">
    <location>
        <position position="85"/>
    </location>
</feature>
<feature type="glycosylation site" description="N-linked (GlcNAc...) asparagine" evidence="5">
    <location>
        <position position="128"/>
    </location>
</feature>
<feature type="glycosylation site" description="N-linked (GlcNAc...) asparagine" evidence="5">
    <location>
        <position position="205"/>
    </location>
</feature>
<feature type="glycosylation site" description="N-linked (GlcNAc...) asparagine" evidence="5">
    <location>
        <position position="243"/>
    </location>
</feature>
<feature type="glycosylation site" description="N-linked (GlcNAc...) asparagine" evidence="5">
    <location>
        <position position="251"/>
    </location>
</feature>
<feature type="glycosylation site" description="N-linked (GlcNAc...) asparagine" evidence="5">
    <location>
        <position position="264"/>
    </location>
</feature>
<feature type="glycosylation site" description="N-linked (GlcNAc...) asparagine" evidence="5">
    <location>
        <position position="301"/>
    </location>
</feature>
<feature type="glycosylation site" description="N-linked (GlcNAc...) asparagine" evidence="5">
    <location>
        <position position="325"/>
    </location>
</feature>
<feature type="glycosylation site" description="N-linked (GlcNAc...) asparagine" evidence="5">
    <location>
        <position position="469"/>
    </location>
</feature>
<feature type="glycosylation site" description="N-linked (GlcNAc...) asparagine" evidence="5">
    <location>
        <position position="491"/>
    </location>
</feature>
<feature type="glycosylation site" description="N-linked (GlcNAc...) asparagine" evidence="5">
    <location>
        <position position="615"/>
    </location>
</feature>
<feature type="sequence conflict" description="In Ref. 4; BAF00973." evidence="11" ref="4">
    <original>K</original>
    <variation>E</variation>
    <location>
        <position position="503"/>
    </location>
</feature>
<protein>
    <recommendedName>
        <fullName evidence="10">Receptor protein-tyrosine kinase CEPR2</fullName>
        <ecNumber evidence="6">2.7.10.1</ecNumber>
    </recommendedName>
    <alternativeName>
        <fullName evidence="10">Protein C-TERMINALLY ENCODED PEPTIDE RECEPTOR 2</fullName>
    </alternativeName>
</protein>
<organism>
    <name type="scientific">Arabidopsis thaliana</name>
    <name type="common">Mouse-ear cress</name>
    <dbReference type="NCBI Taxonomy" id="3702"/>
    <lineage>
        <taxon>Eukaryota</taxon>
        <taxon>Viridiplantae</taxon>
        <taxon>Streptophyta</taxon>
        <taxon>Embryophyta</taxon>
        <taxon>Tracheophyta</taxon>
        <taxon>Spermatophyta</taxon>
        <taxon>Magnoliopsida</taxon>
        <taxon>eudicotyledons</taxon>
        <taxon>Gunneridae</taxon>
        <taxon>Pentapetalae</taxon>
        <taxon>rosids</taxon>
        <taxon>malvids</taxon>
        <taxon>Brassicales</taxon>
        <taxon>Brassicaceae</taxon>
        <taxon>Camelineae</taxon>
        <taxon>Arabidopsis</taxon>
    </lineage>
</organism>
<sequence length="977" mass="107905">MSRRPDLLRGSVVATVAATFLLFIFPPNVESTVEKQALFRFKNRLDDSHNILQSWKPSDSPCVFRGITCDPLSGEVIGISLGNVNLSGTISPSISALTKLSTLSLPSNFISGRIPPEIVNCKNLKVLNLTSNRLSGTIPNLSPLKSLEILDISGNFLNGEFQSWIGNMNQLVSLGLGNNHYEEGIIPESIGGLKKLTWLFLARSNLTGKIPNSIFDLNALDTFDIANNAISDDFPILISRLVNLTKIELFNNSLTGKIPPEIKNLTRLREFDISSNQLSGVLPEELGVLKELRVFHCHENNFTGEFPSGFGDLSHLTSLSIYRNNFSGEFPVNIGRFSPLDTVDISENEFTGPFPRFLCQNKKLQFLLALQNEFSGEIPRSYGECKSLLRLRINNNRLSGQVVEGFWSLPLAKMIDLSDNELTGEVSPQIGLSTELSQLILQNNRFSGKIPRELGRLTNIERIYLSNNNLSGEIPMEVGDLKELSSLHLENNSLTGFIPKELKNCVKLVDLNLAKNFLTGEIPNSLSQIASLNSLDFSGNRLTGEIPASLVKLKLSFIDLSGNQLSGRIPPDLLAVGGSTAFSRNEKLCVDKENAKTNQNLGLSICSGYQNVKRNSSLDGTLLFLALAIVVVVLVSGLFALRYRVVKIRELDSENRDINKADAKWKIASFHQMELDVDEICRLDEDHVIGSGSAGKVYRVDLKKGGGTVAVKWLKRGGGEEGDGTEVSVAEMEILGKIRHRNVLKLYACLVGRGSRYLVFEFMENGNLYQALGNNIKGGLPELDWLKRYKIAVGAAKGIAYLHHDCCPPIIHRDIKSSNILLDGDYESKIADFGVAKVADKGYEWSCVAGTHGYMAPELAYSFKATEKSDVYSFGVVLLELVTGLRPMEDEFGEGKDIVDYVYSQIQQDPRNLQNVLDKQVLSTYIEESMIRVLKMGLLCTTKLPNLRPSMREVVRKLDDADPCVSNSQDTTGKITV</sequence>
<proteinExistence type="evidence at protein level"/>
<reference key="1">
    <citation type="journal article" date="2010" name="BMC Genomics">
        <title>Genome-wide cloning and sequence analysis of leucine-rich repeat receptor-like protein kinase genes in Arabidopsis thaliana.</title>
        <authorList>
            <person name="Gou X."/>
            <person name="He K."/>
            <person name="Yang H."/>
            <person name="Yuan T."/>
            <person name="Lin H."/>
            <person name="Clouse S.D."/>
            <person name="Li J."/>
        </authorList>
    </citation>
    <scope>NUCLEOTIDE SEQUENCE [MRNA]</scope>
    <scope>GENE FAMILY</scope>
    <source>
        <strain>cv. Columbia</strain>
    </source>
</reference>
<reference key="2">
    <citation type="journal article" date="2000" name="Nature">
        <title>Sequence and analysis of chromosome 1 of the plant Arabidopsis thaliana.</title>
        <authorList>
            <person name="Theologis A."/>
            <person name="Ecker J.R."/>
            <person name="Palm C.J."/>
            <person name="Federspiel N.A."/>
            <person name="Kaul S."/>
            <person name="White O."/>
            <person name="Alonso J."/>
            <person name="Altafi H."/>
            <person name="Araujo R."/>
            <person name="Bowman C.L."/>
            <person name="Brooks S.Y."/>
            <person name="Buehler E."/>
            <person name="Chan A."/>
            <person name="Chao Q."/>
            <person name="Chen H."/>
            <person name="Cheuk R.F."/>
            <person name="Chin C.W."/>
            <person name="Chung M.K."/>
            <person name="Conn L."/>
            <person name="Conway A.B."/>
            <person name="Conway A.R."/>
            <person name="Creasy T.H."/>
            <person name="Dewar K."/>
            <person name="Dunn P."/>
            <person name="Etgu P."/>
            <person name="Feldblyum T.V."/>
            <person name="Feng J.-D."/>
            <person name="Fong B."/>
            <person name="Fujii C.Y."/>
            <person name="Gill J.E."/>
            <person name="Goldsmith A.D."/>
            <person name="Haas B."/>
            <person name="Hansen N.F."/>
            <person name="Hughes B."/>
            <person name="Huizar L."/>
            <person name="Hunter J.L."/>
            <person name="Jenkins J."/>
            <person name="Johnson-Hopson C."/>
            <person name="Khan S."/>
            <person name="Khaykin E."/>
            <person name="Kim C.J."/>
            <person name="Koo H.L."/>
            <person name="Kremenetskaia I."/>
            <person name="Kurtz D.B."/>
            <person name="Kwan A."/>
            <person name="Lam B."/>
            <person name="Langin-Hooper S."/>
            <person name="Lee A."/>
            <person name="Lee J.M."/>
            <person name="Lenz C.A."/>
            <person name="Li J.H."/>
            <person name="Li Y.-P."/>
            <person name="Lin X."/>
            <person name="Liu S.X."/>
            <person name="Liu Z.A."/>
            <person name="Luros J.S."/>
            <person name="Maiti R."/>
            <person name="Marziali A."/>
            <person name="Militscher J."/>
            <person name="Miranda M."/>
            <person name="Nguyen M."/>
            <person name="Nierman W.C."/>
            <person name="Osborne B.I."/>
            <person name="Pai G."/>
            <person name="Peterson J."/>
            <person name="Pham P.K."/>
            <person name="Rizzo M."/>
            <person name="Rooney T."/>
            <person name="Rowley D."/>
            <person name="Sakano H."/>
            <person name="Salzberg S.L."/>
            <person name="Schwartz J.R."/>
            <person name="Shinn P."/>
            <person name="Southwick A.M."/>
            <person name="Sun H."/>
            <person name="Tallon L.J."/>
            <person name="Tambunga G."/>
            <person name="Toriumi M.J."/>
            <person name="Town C.D."/>
            <person name="Utterback T."/>
            <person name="Van Aken S."/>
            <person name="Vaysberg M."/>
            <person name="Vysotskaia V.S."/>
            <person name="Walker M."/>
            <person name="Wu D."/>
            <person name="Yu G."/>
            <person name="Fraser C.M."/>
            <person name="Venter J.C."/>
            <person name="Davis R.W."/>
        </authorList>
    </citation>
    <scope>NUCLEOTIDE SEQUENCE [LARGE SCALE GENOMIC DNA]</scope>
    <source>
        <strain>cv. Columbia</strain>
    </source>
</reference>
<reference key="3">
    <citation type="journal article" date="2017" name="Plant J.">
        <title>Araport11: a complete reannotation of the Arabidopsis thaliana reference genome.</title>
        <authorList>
            <person name="Cheng C.Y."/>
            <person name="Krishnakumar V."/>
            <person name="Chan A.P."/>
            <person name="Thibaud-Nissen F."/>
            <person name="Schobel S."/>
            <person name="Town C.D."/>
        </authorList>
    </citation>
    <scope>GENOME REANNOTATION</scope>
    <source>
        <strain>cv. Columbia</strain>
    </source>
</reference>
<reference key="4">
    <citation type="submission" date="2006-07" db="EMBL/GenBank/DDBJ databases">
        <title>Large-scale analysis of RIKEN Arabidopsis full-length (RAFL) cDNAs.</title>
        <authorList>
            <person name="Totoki Y."/>
            <person name="Seki M."/>
            <person name="Ishida J."/>
            <person name="Nakajima M."/>
            <person name="Enju A."/>
            <person name="Kamiya A."/>
            <person name="Narusaka M."/>
            <person name="Shin-i T."/>
            <person name="Nakagawa M."/>
            <person name="Sakamoto N."/>
            <person name="Oishi K."/>
            <person name="Kohara Y."/>
            <person name="Kobayashi M."/>
            <person name="Toyoda A."/>
            <person name="Sakaki Y."/>
            <person name="Sakurai T."/>
            <person name="Iida K."/>
            <person name="Akiyama K."/>
            <person name="Satou M."/>
            <person name="Toyoda T."/>
            <person name="Konagaya A."/>
            <person name="Carninci P."/>
            <person name="Kawai J."/>
            <person name="Hayashizaki Y."/>
            <person name="Shinozaki K."/>
        </authorList>
    </citation>
    <scope>NUCLEOTIDE SEQUENCE [LARGE SCALE MRNA]</scope>
    <source>
        <strain>cv. Columbia</strain>
    </source>
</reference>
<reference key="5">
    <citation type="journal article" date="2003" name="Curr. Opin. Plant Biol.">
        <title>Using mutant alleles to determine the structure and function of leucine-rich repeat receptor-like kinases.</title>
        <authorList>
            <person name="Dievart A."/>
            <person name="Clark S.E."/>
        </authorList>
    </citation>
    <scope>GENE FAMILY</scope>
</reference>
<reference key="6">
    <citation type="journal article" date="2003" name="Plant Cell">
        <title>Genome-wide analysis of NBS-LRR-encoding genes in Arabidopsis.</title>
        <authorList>
            <person name="Meyers B.C."/>
            <person name="Kozik A."/>
            <person name="Griego A."/>
            <person name="Kuang H."/>
            <person name="Michelmore R.W."/>
        </authorList>
    </citation>
    <scope>REVIEW</scope>
</reference>
<reference key="7">
    <citation type="journal article" date="2010" name="Front. Physiol.">
        <title>A membrane protein/signaling protein interaction network for Arabidopsis version AMPv2.</title>
        <authorList>
            <person name="Lalonde S."/>
            <person name="Sero A."/>
            <person name="Pratelli R."/>
            <person name="Pilot G."/>
            <person name="Chen J."/>
            <person name="Sardi M.I."/>
            <person name="Parsa S.A."/>
            <person name="Kim D.Y."/>
            <person name="Acharya B.R."/>
            <person name="Stein E.V."/>
            <person name="Hu H.C."/>
            <person name="Villiers F."/>
            <person name="Takeda K."/>
            <person name="Yang Y."/>
            <person name="Han Y.S."/>
            <person name="Schwacke R."/>
            <person name="Chiang W."/>
            <person name="Kato N."/>
            <person name="Loque D."/>
            <person name="Assmann S.M."/>
            <person name="Kwak J.M."/>
            <person name="Schroeder J.I."/>
            <person name="Rhee S.Y."/>
            <person name="Frommer W.B."/>
        </authorList>
    </citation>
    <scope>INTERACTION WITH AMT1-1</scope>
</reference>
<reference key="8">
    <citation type="journal article" date="2011" name="Plant Mol. Biol.">
        <title>Probing the roles of LRR RLK genes in Arabidopsis thaliana roots using a custom T-DNA insertion set.</title>
        <authorList>
            <person name="ten Hove C.A."/>
            <person name="Bochdanovits Z."/>
            <person name="Jansweijer V.M."/>
            <person name="Koning F.G."/>
            <person name="Berke L."/>
            <person name="Sanchez-Perez G.F."/>
            <person name="Scheres B."/>
            <person name="Heidstra R."/>
        </authorList>
    </citation>
    <scope>DISRUPTION PHENOTYPE</scope>
</reference>
<reference key="9">
    <citation type="journal article" date="2014" name="Science">
        <title>Perception of root-derived peptides by shoot LRR-RKs mediates systemic N-demand signaling.</title>
        <authorList>
            <person name="Tabata R."/>
            <person name="Sumida K."/>
            <person name="Yoshii T."/>
            <person name="Ohyama K."/>
            <person name="Shinohara H."/>
            <person name="Matsubayashi Y."/>
        </authorList>
    </citation>
    <scope>FUNCTION</scope>
    <scope>DISRUPTION PHENOTYPE</scope>
    <scope>INTERACTION WITH CEP1</scope>
    <scope>TISSUE SPECIFICITY</scope>
    <source>
        <strain>cv. No-0</strain>
    </source>
</reference>
<comment type="function">
    <text evidence="9">Receptor kinase involved in the perception of C-terminally encoded plant signaling peptide (CEP) and subsequent regulation of root and shoot development. Together with CEPR1, mediates systemic nitrogen (N)-demand signaling upon the perception of root-derived peptides (e.g. CEP1) via the up-regulation of genes involved in N uptake and assimilation pathways.</text>
</comment>
<comment type="catalytic activity">
    <reaction evidence="6">
        <text>L-tyrosyl-[protein] + ATP = O-phospho-L-tyrosyl-[protein] + ADP + H(+)</text>
        <dbReference type="Rhea" id="RHEA:10596"/>
        <dbReference type="Rhea" id="RHEA-COMP:10136"/>
        <dbReference type="Rhea" id="RHEA-COMP:20101"/>
        <dbReference type="ChEBI" id="CHEBI:15378"/>
        <dbReference type="ChEBI" id="CHEBI:30616"/>
        <dbReference type="ChEBI" id="CHEBI:46858"/>
        <dbReference type="ChEBI" id="CHEBI:61978"/>
        <dbReference type="ChEBI" id="CHEBI:456216"/>
        <dbReference type="EC" id="2.7.10.1"/>
    </reaction>
</comment>
<comment type="subunit">
    <text evidence="7 9">Interacts with the root-derived peptide CEP1 (PubMed:25324386). Binds to the ammonium transporter AMT1-1 (PubMed:21423366).</text>
</comment>
<comment type="interaction">
    <interactant intactId="EBI-16955712">
        <id>Q9C7T7</id>
    </interactant>
    <interactant intactId="EBI-16954682">
        <id>Q9M9S4</id>
        <label>At1g14390</label>
    </interactant>
    <organismsDiffer>false</organismsDiffer>
    <experiments>2</experiments>
</comment>
<comment type="interaction">
    <interactant intactId="EBI-16955712">
        <id>Q9C7T7</id>
    </interactant>
    <interactant intactId="EBI-20655099">
        <id>Q0WVM4</id>
        <label>At2g23950</label>
    </interactant>
    <organismsDiffer>false</organismsDiffer>
    <experiments>2</experiments>
</comment>
<comment type="subcellular location">
    <subcellularLocation>
        <location evidence="11">Cell membrane</location>
        <topology evidence="3">Single-pass membrane protein</topology>
    </subcellularLocation>
</comment>
<comment type="tissue specificity">
    <text evidence="9">Expressed in mature leaves, primary roots, and the root tips of both primary and lateral roots.</text>
</comment>
<comment type="disruption phenotype">
    <text evidence="8 9">The double mutant cepr1 cepr2 is insensitive to CEP1 in a root growth regulation and exhibit pleiotropic phenotype characterized by pale-green leaves and enhanced lateral root elongation. At adult stage, smaller rosette leaves and shorter floral stems, accompanied by anthocyanin accumulation. Down-regulation of genes involved in N uptake and assimilation pathways (e.g. NRT1.1, NRT2.1 and NRT3.1) leading to impaired nitrate uptake activity. Altered systemic induction of genes involved in N uptake and assimilation pathways in N-depletion conditions (PubMed:25324386). Increased resistance to osmotic stress (e.g. mannitol) (PubMed:21431781).</text>
</comment>
<comment type="similarity">
    <text evidence="4">Belongs to the protein kinase superfamily. Ser/Thr protein kinase family.</text>
</comment>
<keyword id="KW-0067">ATP-binding</keyword>
<keyword id="KW-1003">Cell membrane</keyword>
<keyword id="KW-0325">Glycoprotein</keyword>
<keyword id="KW-0418">Kinase</keyword>
<keyword id="KW-0433">Leucine-rich repeat</keyword>
<keyword id="KW-0472">Membrane</keyword>
<keyword id="KW-0547">Nucleotide-binding</keyword>
<keyword id="KW-0597">Phosphoprotein</keyword>
<keyword id="KW-0675">Receptor</keyword>
<keyword id="KW-1185">Reference proteome</keyword>
<keyword id="KW-0677">Repeat</keyword>
<keyword id="KW-0723">Serine/threonine-protein kinase</keyword>
<keyword id="KW-0732">Signal</keyword>
<keyword id="KW-0808">Transferase</keyword>
<keyword id="KW-0812">Transmembrane</keyword>
<keyword id="KW-1133">Transmembrane helix</keyword>
<evidence type="ECO:0000250" key="1">
    <source>
        <dbReference type="UniProtKB" id="C0LGT6"/>
    </source>
</evidence>
<evidence type="ECO:0000250" key="2">
    <source>
        <dbReference type="UniProtKB" id="Q9M0G7"/>
    </source>
</evidence>
<evidence type="ECO:0000255" key="3"/>
<evidence type="ECO:0000255" key="4">
    <source>
        <dbReference type="PROSITE-ProRule" id="PRU00159"/>
    </source>
</evidence>
<evidence type="ECO:0000255" key="5">
    <source>
        <dbReference type="PROSITE-ProRule" id="PRU00498"/>
    </source>
</evidence>
<evidence type="ECO:0000255" key="6">
    <source>
        <dbReference type="PROSITE-ProRule" id="PRU10027"/>
    </source>
</evidence>
<evidence type="ECO:0000269" key="7">
    <source>
    </source>
</evidence>
<evidence type="ECO:0000269" key="8">
    <source>
    </source>
</evidence>
<evidence type="ECO:0000269" key="9">
    <source>
    </source>
</evidence>
<evidence type="ECO:0000303" key="10">
    <source>
    </source>
</evidence>
<evidence type="ECO:0000305" key="11"/>
<evidence type="ECO:0000312" key="12">
    <source>
        <dbReference type="Araport" id="AT1G72180"/>
    </source>
</evidence>
<evidence type="ECO:0000312" key="13">
    <source>
        <dbReference type="EMBL" id="AAG51800.1"/>
    </source>
</evidence>
<dbReference type="EC" id="2.7.10.1" evidence="6"/>
<dbReference type="EMBL" id="FJ708677">
    <property type="protein sequence ID" value="ACN59272.1"/>
    <property type="molecule type" value="mRNA"/>
</dbReference>
<dbReference type="EMBL" id="AC067754">
    <property type="protein sequence ID" value="AAG51800.1"/>
    <property type="molecule type" value="Genomic_DNA"/>
</dbReference>
<dbReference type="EMBL" id="CP002684">
    <property type="protein sequence ID" value="AEE35286.1"/>
    <property type="molecule type" value="Genomic_DNA"/>
</dbReference>
<dbReference type="EMBL" id="AK229093">
    <property type="protein sequence ID" value="BAF00973.1"/>
    <property type="molecule type" value="mRNA"/>
</dbReference>
<dbReference type="PIR" id="C96745">
    <property type="entry name" value="C96745"/>
</dbReference>
<dbReference type="RefSeq" id="NP_177363.1">
    <property type="nucleotide sequence ID" value="NM_105877.3"/>
</dbReference>
<dbReference type="SMR" id="Q9C7T7"/>
<dbReference type="FunCoup" id="Q9C7T7">
    <property type="interactions" value="371"/>
</dbReference>
<dbReference type="IntAct" id="Q9C7T7">
    <property type="interactions" value="40"/>
</dbReference>
<dbReference type="STRING" id="3702.Q9C7T7"/>
<dbReference type="GlyCosmos" id="Q9C7T7">
    <property type="glycosylation" value="11 sites, No reported glycans"/>
</dbReference>
<dbReference type="GlyGen" id="Q9C7T7">
    <property type="glycosylation" value="11 sites"/>
</dbReference>
<dbReference type="PaxDb" id="3702-AT1G72180.1"/>
<dbReference type="ProteomicsDB" id="223981"/>
<dbReference type="EnsemblPlants" id="AT1G72180.1">
    <property type="protein sequence ID" value="AT1G72180.1"/>
    <property type="gene ID" value="AT1G72180"/>
</dbReference>
<dbReference type="GeneID" id="843550"/>
<dbReference type="Gramene" id="AT1G72180.1">
    <property type="protein sequence ID" value="AT1G72180.1"/>
    <property type="gene ID" value="AT1G72180"/>
</dbReference>
<dbReference type="KEGG" id="ath:AT1G72180"/>
<dbReference type="Araport" id="AT1G72180"/>
<dbReference type="TAIR" id="AT1G72180">
    <property type="gene designation" value="CEPR2"/>
</dbReference>
<dbReference type="eggNOG" id="ENOG502QRD1">
    <property type="taxonomic scope" value="Eukaryota"/>
</dbReference>
<dbReference type="HOGENOM" id="CLU_000288_22_1_1"/>
<dbReference type="InParanoid" id="Q9C7T7"/>
<dbReference type="OMA" id="CDSLQRF"/>
<dbReference type="PhylomeDB" id="Q9C7T7"/>
<dbReference type="PRO" id="PR:Q9C7T7"/>
<dbReference type="Proteomes" id="UP000006548">
    <property type="component" value="Chromosome 1"/>
</dbReference>
<dbReference type="ExpressionAtlas" id="Q9C7T7">
    <property type="expression patterns" value="baseline and differential"/>
</dbReference>
<dbReference type="GO" id="GO:0005886">
    <property type="term" value="C:plasma membrane"/>
    <property type="evidence" value="ECO:0007669"/>
    <property type="project" value="UniProtKB-SubCell"/>
</dbReference>
<dbReference type="GO" id="GO:0005524">
    <property type="term" value="F:ATP binding"/>
    <property type="evidence" value="ECO:0007669"/>
    <property type="project" value="UniProtKB-KW"/>
</dbReference>
<dbReference type="GO" id="GO:0042277">
    <property type="term" value="F:peptide binding"/>
    <property type="evidence" value="ECO:0000314"/>
    <property type="project" value="TAIR"/>
</dbReference>
<dbReference type="GO" id="GO:0017046">
    <property type="term" value="F:peptide hormone binding"/>
    <property type="evidence" value="ECO:0000314"/>
    <property type="project" value="UniProtKB"/>
</dbReference>
<dbReference type="GO" id="GO:0001653">
    <property type="term" value="F:peptide receptor activity"/>
    <property type="evidence" value="ECO:0000316"/>
    <property type="project" value="UniProtKB"/>
</dbReference>
<dbReference type="GO" id="GO:0004674">
    <property type="term" value="F:protein serine/threonine kinase activity"/>
    <property type="evidence" value="ECO:0007669"/>
    <property type="project" value="UniProtKB-KW"/>
</dbReference>
<dbReference type="GO" id="GO:0004714">
    <property type="term" value="F:transmembrane receptor protein tyrosine kinase activity"/>
    <property type="evidence" value="ECO:0007669"/>
    <property type="project" value="UniProtKB-EC"/>
</dbReference>
<dbReference type="GO" id="GO:1902025">
    <property type="term" value="P:nitrate import"/>
    <property type="evidence" value="ECO:0000316"/>
    <property type="project" value="UniProtKB"/>
</dbReference>
<dbReference type="GO" id="GO:2000280">
    <property type="term" value="P:regulation of root development"/>
    <property type="evidence" value="ECO:0000316"/>
    <property type="project" value="UniProtKB"/>
</dbReference>
<dbReference type="GO" id="GO:0048831">
    <property type="term" value="P:regulation of shoot system development"/>
    <property type="evidence" value="ECO:0000316"/>
    <property type="project" value="UniProtKB"/>
</dbReference>
<dbReference type="GO" id="GO:0010555">
    <property type="term" value="P:response to mannitol"/>
    <property type="evidence" value="ECO:0000315"/>
    <property type="project" value="UniProtKB"/>
</dbReference>
<dbReference type="GO" id="GO:0090548">
    <property type="term" value="P:response to nitrate starvation"/>
    <property type="evidence" value="ECO:0000316"/>
    <property type="project" value="TAIR"/>
</dbReference>
<dbReference type="GO" id="GO:0006970">
    <property type="term" value="P:response to osmotic stress"/>
    <property type="evidence" value="ECO:0000315"/>
    <property type="project" value="UniProtKB"/>
</dbReference>
<dbReference type="CDD" id="cd14066">
    <property type="entry name" value="STKc_IRAK"/>
    <property type="match status" value="1"/>
</dbReference>
<dbReference type="FunFam" id="1.10.510.10:FF:000417">
    <property type="entry name" value="Leucine-rich repeat receptor-like protein kinase"/>
    <property type="match status" value="1"/>
</dbReference>
<dbReference type="FunFam" id="3.80.10.10:FF:002055">
    <property type="entry name" value="Leucine-rich repeat receptor-like protein kinase PEPR1"/>
    <property type="match status" value="1"/>
</dbReference>
<dbReference type="FunFam" id="3.80.10.10:FF:000234">
    <property type="entry name" value="Probable inactive receptor kinase RLK902"/>
    <property type="match status" value="1"/>
</dbReference>
<dbReference type="FunFam" id="3.80.10.10:FF:001191">
    <property type="entry name" value="Receptor protein-tyrosine kinase CEPR2"/>
    <property type="match status" value="1"/>
</dbReference>
<dbReference type="Gene3D" id="3.30.200.20">
    <property type="entry name" value="Phosphorylase Kinase, domain 1"/>
    <property type="match status" value="1"/>
</dbReference>
<dbReference type="Gene3D" id="3.80.10.10">
    <property type="entry name" value="Ribonuclease Inhibitor"/>
    <property type="match status" value="5"/>
</dbReference>
<dbReference type="Gene3D" id="1.10.510.10">
    <property type="entry name" value="Transferase(Phosphotransferase) domain 1"/>
    <property type="match status" value="1"/>
</dbReference>
<dbReference type="InterPro" id="IPR011009">
    <property type="entry name" value="Kinase-like_dom_sf"/>
</dbReference>
<dbReference type="InterPro" id="IPR001611">
    <property type="entry name" value="Leu-rich_rpt"/>
</dbReference>
<dbReference type="InterPro" id="IPR032675">
    <property type="entry name" value="LRR_dom_sf"/>
</dbReference>
<dbReference type="InterPro" id="IPR013210">
    <property type="entry name" value="LRR_N_plant-typ"/>
</dbReference>
<dbReference type="InterPro" id="IPR050647">
    <property type="entry name" value="Plant_LRR-RLKs"/>
</dbReference>
<dbReference type="InterPro" id="IPR000719">
    <property type="entry name" value="Prot_kinase_dom"/>
</dbReference>
<dbReference type="InterPro" id="IPR008271">
    <property type="entry name" value="Ser/Thr_kinase_AS"/>
</dbReference>
<dbReference type="PANTHER" id="PTHR48056">
    <property type="entry name" value="LRR RECEPTOR-LIKE SERINE/THREONINE-PROTEIN KINASE-RELATED"/>
    <property type="match status" value="1"/>
</dbReference>
<dbReference type="PANTHER" id="PTHR48056:SF20">
    <property type="entry name" value="PROTEIN KINASE DOMAIN-CONTAINING PROTEIN"/>
    <property type="match status" value="1"/>
</dbReference>
<dbReference type="Pfam" id="PF00560">
    <property type="entry name" value="LRR_1"/>
    <property type="match status" value="8"/>
</dbReference>
<dbReference type="Pfam" id="PF13855">
    <property type="entry name" value="LRR_8"/>
    <property type="match status" value="1"/>
</dbReference>
<dbReference type="Pfam" id="PF08263">
    <property type="entry name" value="LRRNT_2"/>
    <property type="match status" value="1"/>
</dbReference>
<dbReference type="Pfam" id="PF00069">
    <property type="entry name" value="Pkinase"/>
    <property type="match status" value="1"/>
</dbReference>
<dbReference type="SMART" id="SM00220">
    <property type="entry name" value="S_TKc"/>
    <property type="match status" value="1"/>
</dbReference>
<dbReference type="SUPFAM" id="SSF52058">
    <property type="entry name" value="L domain-like"/>
    <property type="match status" value="1"/>
</dbReference>
<dbReference type="SUPFAM" id="SSF56112">
    <property type="entry name" value="Protein kinase-like (PK-like)"/>
    <property type="match status" value="1"/>
</dbReference>
<dbReference type="SUPFAM" id="SSF52047">
    <property type="entry name" value="RNI-like"/>
    <property type="match status" value="1"/>
</dbReference>
<dbReference type="PROSITE" id="PS51450">
    <property type="entry name" value="LRR"/>
    <property type="match status" value="11"/>
</dbReference>
<dbReference type="PROSITE" id="PS50011">
    <property type="entry name" value="PROTEIN_KINASE_DOM"/>
    <property type="match status" value="1"/>
</dbReference>
<dbReference type="PROSITE" id="PS00108">
    <property type="entry name" value="PROTEIN_KINASE_ST"/>
    <property type="match status" value="1"/>
</dbReference>
<accession>Q9C7T7</accession>
<accession>Q0WPH6</accession>
<name>CEPR2_ARATH</name>
<gene>
    <name evidence="10" type="primary">CEPR2</name>
    <name evidence="12" type="ordered locus">At1g72180</name>
    <name evidence="13" type="ORF">T9N14.3</name>
</gene>